<proteinExistence type="inferred from homology"/>
<accession>B2TWC8</accession>
<evidence type="ECO:0000255" key="1">
    <source>
        <dbReference type="HAMAP-Rule" id="MF_00248"/>
    </source>
</evidence>
<dbReference type="EC" id="3.4.25.2" evidence="1"/>
<dbReference type="EMBL" id="CP001063">
    <property type="protein sequence ID" value="ACD10146.1"/>
    <property type="molecule type" value="Genomic_DNA"/>
</dbReference>
<dbReference type="RefSeq" id="WP_000208242.1">
    <property type="nucleotide sequence ID" value="NC_010658.1"/>
</dbReference>
<dbReference type="SMR" id="B2TWC8"/>
<dbReference type="STRING" id="344609.SbBS512_E4414"/>
<dbReference type="MEROPS" id="T01.006"/>
<dbReference type="GeneID" id="93777966"/>
<dbReference type="KEGG" id="sbc:SbBS512_E4414"/>
<dbReference type="HOGENOM" id="CLU_093872_1_0_6"/>
<dbReference type="Proteomes" id="UP000001030">
    <property type="component" value="Chromosome"/>
</dbReference>
<dbReference type="GO" id="GO:0009376">
    <property type="term" value="C:HslUV protease complex"/>
    <property type="evidence" value="ECO:0007669"/>
    <property type="project" value="UniProtKB-UniRule"/>
</dbReference>
<dbReference type="GO" id="GO:0005839">
    <property type="term" value="C:proteasome core complex"/>
    <property type="evidence" value="ECO:0007669"/>
    <property type="project" value="InterPro"/>
</dbReference>
<dbReference type="GO" id="GO:0046872">
    <property type="term" value="F:metal ion binding"/>
    <property type="evidence" value="ECO:0007669"/>
    <property type="project" value="UniProtKB-KW"/>
</dbReference>
<dbReference type="GO" id="GO:0004298">
    <property type="term" value="F:threonine-type endopeptidase activity"/>
    <property type="evidence" value="ECO:0007669"/>
    <property type="project" value="UniProtKB-KW"/>
</dbReference>
<dbReference type="GO" id="GO:0051603">
    <property type="term" value="P:proteolysis involved in protein catabolic process"/>
    <property type="evidence" value="ECO:0007669"/>
    <property type="project" value="InterPro"/>
</dbReference>
<dbReference type="CDD" id="cd01913">
    <property type="entry name" value="protease_HslV"/>
    <property type="match status" value="1"/>
</dbReference>
<dbReference type="FunFam" id="3.60.20.10:FF:000002">
    <property type="entry name" value="ATP-dependent protease subunit HslV"/>
    <property type="match status" value="1"/>
</dbReference>
<dbReference type="Gene3D" id="3.60.20.10">
    <property type="entry name" value="Glutamine Phosphoribosylpyrophosphate, subunit 1, domain 1"/>
    <property type="match status" value="1"/>
</dbReference>
<dbReference type="HAMAP" id="MF_00248">
    <property type="entry name" value="HslV"/>
    <property type="match status" value="1"/>
</dbReference>
<dbReference type="InterPro" id="IPR022281">
    <property type="entry name" value="ATP-dep_Prtase_HsIV_su"/>
</dbReference>
<dbReference type="InterPro" id="IPR029055">
    <property type="entry name" value="Ntn_hydrolases_N"/>
</dbReference>
<dbReference type="InterPro" id="IPR001353">
    <property type="entry name" value="Proteasome_sua/b"/>
</dbReference>
<dbReference type="InterPro" id="IPR023333">
    <property type="entry name" value="Proteasome_suB-type"/>
</dbReference>
<dbReference type="NCBIfam" id="TIGR03692">
    <property type="entry name" value="ATP_dep_HslV"/>
    <property type="match status" value="1"/>
</dbReference>
<dbReference type="NCBIfam" id="NF003964">
    <property type="entry name" value="PRK05456.1"/>
    <property type="match status" value="1"/>
</dbReference>
<dbReference type="PANTHER" id="PTHR32194:SF0">
    <property type="entry name" value="ATP-DEPENDENT PROTEASE SUBUNIT HSLV"/>
    <property type="match status" value="1"/>
</dbReference>
<dbReference type="PANTHER" id="PTHR32194">
    <property type="entry name" value="METALLOPROTEASE TLDD"/>
    <property type="match status" value="1"/>
</dbReference>
<dbReference type="Pfam" id="PF00227">
    <property type="entry name" value="Proteasome"/>
    <property type="match status" value="1"/>
</dbReference>
<dbReference type="PIRSF" id="PIRSF039093">
    <property type="entry name" value="HslV"/>
    <property type="match status" value="1"/>
</dbReference>
<dbReference type="SUPFAM" id="SSF56235">
    <property type="entry name" value="N-terminal nucleophile aminohydrolases (Ntn hydrolases)"/>
    <property type="match status" value="1"/>
</dbReference>
<dbReference type="PROSITE" id="PS51476">
    <property type="entry name" value="PROTEASOME_BETA_2"/>
    <property type="match status" value="1"/>
</dbReference>
<protein>
    <recommendedName>
        <fullName evidence="1">ATP-dependent protease subunit HslV</fullName>
        <ecNumber evidence="1">3.4.25.2</ecNumber>
    </recommendedName>
    <alternativeName>
        <fullName evidence="1">Heat shock protein HslV</fullName>
    </alternativeName>
</protein>
<organism>
    <name type="scientific">Shigella boydii serotype 18 (strain CDC 3083-94 / BS512)</name>
    <dbReference type="NCBI Taxonomy" id="344609"/>
    <lineage>
        <taxon>Bacteria</taxon>
        <taxon>Pseudomonadati</taxon>
        <taxon>Pseudomonadota</taxon>
        <taxon>Gammaproteobacteria</taxon>
        <taxon>Enterobacterales</taxon>
        <taxon>Enterobacteriaceae</taxon>
        <taxon>Shigella</taxon>
    </lineage>
</organism>
<sequence>MTTIVSVRRNGHVVIAGDGQATLGNTVMKGNVKKVRRLYNDKVIAGFAGGTADAFTLFELFERKLEMHQGHLVKAAVELAKDWRTDRMLRKLEALLAVADETASLIITGNGDVVQPENDLIAIGSGGPYAQAAARALLENTELSAREIAEKALDIAGDICIYTNHFHTIEELSYKA</sequence>
<keyword id="KW-0021">Allosteric enzyme</keyword>
<keyword id="KW-0963">Cytoplasm</keyword>
<keyword id="KW-0378">Hydrolase</keyword>
<keyword id="KW-0479">Metal-binding</keyword>
<keyword id="KW-0645">Protease</keyword>
<keyword id="KW-1185">Reference proteome</keyword>
<keyword id="KW-0915">Sodium</keyword>
<keyword id="KW-0346">Stress response</keyword>
<keyword id="KW-0888">Threonine protease</keyword>
<reference key="1">
    <citation type="submission" date="2008-05" db="EMBL/GenBank/DDBJ databases">
        <title>Complete sequence of Shigella boydii serotype 18 strain BS512.</title>
        <authorList>
            <person name="Rasko D.A."/>
            <person name="Rosovitz M."/>
            <person name="Maurelli A.T."/>
            <person name="Myers G."/>
            <person name="Seshadri R."/>
            <person name="Cer R."/>
            <person name="Jiang L."/>
            <person name="Ravel J."/>
            <person name="Sebastian Y."/>
        </authorList>
    </citation>
    <scope>NUCLEOTIDE SEQUENCE [LARGE SCALE GENOMIC DNA]</scope>
    <source>
        <strain>CDC 3083-94 / BS512</strain>
    </source>
</reference>
<comment type="function">
    <text evidence="1">Protease subunit of a proteasome-like degradation complex believed to be a general protein degrading machinery.</text>
</comment>
<comment type="catalytic activity">
    <reaction evidence="1">
        <text>ATP-dependent cleavage of peptide bonds with broad specificity.</text>
        <dbReference type="EC" id="3.4.25.2"/>
    </reaction>
</comment>
<comment type="activity regulation">
    <text evidence="1">Allosterically activated by HslU binding.</text>
</comment>
<comment type="subunit">
    <text evidence="1">A double ring-shaped homohexamer of HslV is capped on each side by a ring-shaped HslU homohexamer. The assembly of the HslU/HslV complex is dependent on binding of ATP.</text>
</comment>
<comment type="subcellular location">
    <subcellularLocation>
        <location evidence="1">Cytoplasm</location>
    </subcellularLocation>
</comment>
<comment type="induction">
    <text evidence="1">By heat shock.</text>
</comment>
<comment type="similarity">
    <text evidence="1">Belongs to the peptidase T1B family. HslV subfamily.</text>
</comment>
<feature type="chain" id="PRO_1000100917" description="ATP-dependent protease subunit HslV">
    <location>
        <begin position="1"/>
        <end position="176"/>
    </location>
</feature>
<feature type="active site" evidence="1">
    <location>
        <position position="2"/>
    </location>
</feature>
<feature type="binding site" evidence="1">
    <location>
        <position position="157"/>
    </location>
    <ligand>
        <name>Na(+)</name>
        <dbReference type="ChEBI" id="CHEBI:29101"/>
    </ligand>
</feature>
<feature type="binding site" evidence="1">
    <location>
        <position position="160"/>
    </location>
    <ligand>
        <name>Na(+)</name>
        <dbReference type="ChEBI" id="CHEBI:29101"/>
    </ligand>
</feature>
<feature type="binding site" evidence="1">
    <location>
        <position position="163"/>
    </location>
    <ligand>
        <name>Na(+)</name>
        <dbReference type="ChEBI" id="CHEBI:29101"/>
    </ligand>
</feature>
<name>HSLV_SHIB3</name>
<gene>
    <name evidence="1" type="primary">hslV</name>
    <name type="ordered locus">SbBS512_E4414</name>
</gene>